<evidence type="ECO:0000255" key="1">
    <source>
        <dbReference type="PROSITE-ProRule" id="PRU00080"/>
    </source>
</evidence>
<reference key="1">
    <citation type="journal article" date="1999" name="Nature">
        <title>Sequence and analysis of chromosome 2 of the plant Arabidopsis thaliana.</title>
        <authorList>
            <person name="Lin X."/>
            <person name="Kaul S."/>
            <person name="Rounsley S.D."/>
            <person name="Shea T.P."/>
            <person name="Benito M.-I."/>
            <person name="Town C.D."/>
            <person name="Fujii C.Y."/>
            <person name="Mason T.M."/>
            <person name="Bowman C.L."/>
            <person name="Barnstead M.E."/>
            <person name="Feldblyum T.V."/>
            <person name="Buell C.R."/>
            <person name="Ketchum K.A."/>
            <person name="Lee J.J."/>
            <person name="Ronning C.M."/>
            <person name="Koo H.L."/>
            <person name="Moffat K.S."/>
            <person name="Cronin L.A."/>
            <person name="Shen M."/>
            <person name="Pai G."/>
            <person name="Van Aken S."/>
            <person name="Umayam L."/>
            <person name="Tallon L.J."/>
            <person name="Gill J.E."/>
            <person name="Adams M.D."/>
            <person name="Carrera A.J."/>
            <person name="Creasy T.H."/>
            <person name="Goodman H.M."/>
            <person name="Somerville C.R."/>
            <person name="Copenhaver G.P."/>
            <person name="Preuss D."/>
            <person name="Nierman W.C."/>
            <person name="White O."/>
            <person name="Eisen J.A."/>
            <person name="Salzberg S.L."/>
            <person name="Fraser C.M."/>
            <person name="Venter J.C."/>
        </authorList>
    </citation>
    <scope>NUCLEOTIDE SEQUENCE [LARGE SCALE GENOMIC DNA]</scope>
    <source>
        <strain>cv. Columbia</strain>
    </source>
</reference>
<reference key="2">
    <citation type="journal article" date="2017" name="Plant J.">
        <title>Araport11: a complete reannotation of the Arabidopsis thaliana reference genome.</title>
        <authorList>
            <person name="Cheng C.Y."/>
            <person name="Krishnakumar V."/>
            <person name="Chan A.P."/>
            <person name="Thibaud-Nissen F."/>
            <person name="Schobel S."/>
            <person name="Town C.D."/>
        </authorList>
    </citation>
    <scope>GENOME REANNOTATION</scope>
    <source>
        <strain>cv. Columbia</strain>
    </source>
</reference>
<reference key="3">
    <citation type="journal article" date="2005" name="Plant Physiol.">
        <title>Analysis of the cDNAs of hypothetical genes on Arabidopsis chromosome 2 reveals numerous transcript variants.</title>
        <authorList>
            <person name="Xiao Y.-L."/>
            <person name="Smith S.R."/>
            <person name="Ishmael N."/>
            <person name="Redman J.C."/>
            <person name="Kumar N."/>
            <person name="Monaghan E.L."/>
            <person name="Ayele M."/>
            <person name="Haas B.J."/>
            <person name="Wu H.C."/>
            <person name="Town C.D."/>
        </authorList>
    </citation>
    <scope>NUCLEOTIDE SEQUENCE [LARGE SCALE MRNA] OF 57-302</scope>
    <source>
        <strain>cv. Columbia</strain>
    </source>
</reference>
<gene>
    <name type="ordered locus">At2g14500</name>
    <name type="ORF">T13P21.12</name>
</gene>
<proteinExistence type="evidence at transcript level"/>
<protein>
    <recommendedName>
        <fullName>F-box protein At2g14500</fullName>
    </recommendedName>
</protein>
<accession>Q9ZQR2</accession>
<name>FB103_ARATH</name>
<sequence>METPNPLTLSELPHDLLRNIFNRLSFADFHRATWNSISKQTAPPKTKSPWLILFPDEGVHGCVLYNPDEDRIYKSVRDFSGTIFLANSGNWFLVMDSKSNLYIIDVFSENRIDLPPLESLLSDNFTFEQKGDKELKWQASNDQILVFRLPRAEELRGILWVDEKMKEFVAVWFLEDSCNFLAFYKKADDHYSHIQLEYVITDVFQSVSDIVLHGCFLYIGVGDYIQIIDLSKDQGFKDVTRNYLFNVHNGPWGFRSIFNLVVTTSGEVLMVLNNLYEKNIESEKSFRIFKKDPNPDPNKHDNLLVEVDSLGNEEVMLLDLGITMHGIEPNSIYFTRHDRVVHRLYIS</sequence>
<feature type="chain" id="PRO_0000283376" description="F-box protein At2g14500">
    <location>
        <begin position="1"/>
        <end position="347"/>
    </location>
</feature>
<feature type="domain" description="F-box" evidence="1">
    <location>
        <begin position="6"/>
        <end position="52"/>
    </location>
</feature>
<keyword id="KW-1185">Reference proteome</keyword>
<dbReference type="EMBL" id="AC006067">
    <property type="protein sequence ID" value="AAD15466.1"/>
    <property type="molecule type" value="Genomic_DNA"/>
</dbReference>
<dbReference type="EMBL" id="CP002685">
    <property type="protein sequence ID" value="AEC06306.1"/>
    <property type="molecule type" value="Genomic_DNA"/>
</dbReference>
<dbReference type="EMBL" id="DQ069813">
    <property type="status" value="NOT_ANNOTATED_CDS"/>
    <property type="molecule type" value="mRNA"/>
</dbReference>
<dbReference type="PIR" id="H84517">
    <property type="entry name" value="H84517"/>
</dbReference>
<dbReference type="RefSeq" id="NP_179056.1">
    <property type="nucleotide sequence ID" value="NM_127013.1"/>
</dbReference>
<dbReference type="PaxDb" id="3702-AT2G14500.1"/>
<dbReference type="EnsemblPlants" id="AT2G14500.1">
    <property type="protein sequence ID" value="AT2G14500.1"/>
    <property type="gene ID" value="AT2G14500"/>
</dbReference>
<dbReference type="GeneID" id="815937"/>
<dbReference type="Gramene" id="AT2G14500.1">
    <property type="protein sequence ID" value="AT2G14500.1"/>
    <property type="gene ID" value="AT2G14500"/>
</dbReference>
<dbReference type="KEGG" id="ath:AT2G14500"/>
<dbReference type="Araport" id="AT2G14500"/>
<dbReference type="TAIR" id="AT2G14500">
    <property type="gene designation" value="ATFDB14"/>
</dbReference>
<dbReference type="HOGENOM" id="CLU_019286_7_1_1"/>
<dbReference type="InParanoid" id="Q9ZQR2"/>
<dbReference type="OMA" id="NWFLVMD"/>
<dbReference type="PhylomeDB" id="Q9ZQR2"/>
<dbReference type="PRO" id="PR:Q9ZQR2"/>
<dbReference type="Proteomes" id="UP000006548">
    <property type="component" value="Chromosome 2"/>
</dbReference>
<dbReference type="InterPro" id="IPR050942">
    <property type="entry name" value="F-box_BR-signaling"/>
</dbReference>
<dbReference type="InterPro" id="IPR001810">
    <property type="entry name" value="F-box_dom"/>
</dbReference>
<dbReference type="InterPro" id="IPR005174">
    <property type="entry name" value="KIB1-4_b-propeller"/>
</dbReference>
<dbReference type="PANTHER" id="PTHR44259:SF31">
    <property type="entry name" value="F-BOX FAMILY PROTEIN"/>
    <property type="match status" value="1"/>
</dbReference>
<dbReference type="PANTHER" id="PTHR44259">
    <property type="entry name" value="OS07G0183000 PROTEIN-RELATED"/>
    <property type="match status" value="1"/>
</dbReference>
<dbReference type="Pfam" id="PF03478">
    <property type="entry name" value="Beta-prop_KIB1-4"/>
    <property type="match status" value="1"/>
</dbReference>
<dbReference type="Pfam" id="PF00646">
    <property type="entry name" value="F-box"/>
    <property type="match status" value="1"/>
</dbReference>
<dbReference type="PROSITE" id="PS50181">
    <property type="entry name" value="FBOX"/>
    <property type="match status" value="1"/>
</dbReference>
<organism>
    <name type="scientific">Arabidopsis thaliana</name>
    <name type="common">Mouse-ear cress</name>
    <dbReference type="NCBI Taxonomy" id="3702"/>
    <lineage>
        <taxon>Eukaryota</taxon>
        <taxon>Viridiplantae</taxon>
        <taxon>Streptophyta</taxon>
        <taxon>Embryophyta</taxon>
        <taxon>Tracheophyta</taxon>
        <taxon>Spermatophyta</taxon>
        <taxon>Magnoliopsida</taxon>
        <taxon>eudicotyledons</taxon>
        <taxon>Gunneridae</taxon>
        <taxon>Pentapetalae</taxon>
        <taxon>rosids</taxon>
        <taxon>malvids</taxon>
        <taxon>Brassicales</taxon>
        <taxon>Brassicaceae</taxon>
        <taxon>Camelineae</taxon>
        <taxon>Arabidopsis</taxon>
    </lineage>
</organism>